<keyword id="KW-0963">Cytoplasm</keyword>
<keyword id="KW-0350">Heme biosynthesis</keyword>
<keyword id="KW-0408">Iron</keyword>
<keyword id="KW-0456">Lyase</keyword>
<keyword id="KW-0479">Metal-binding</keyword>
<keyword id="KW-0627">Porphyrin biosynthesis</keyword>
<sequence>MTDHALLLVNLGSPASTSVADVRRYLNQFLMDPYVVDLPWPVRRLLVSLILIKRPEQSAHAYASIWWDEGSPLVVLTRRLQAAMVEHWPHGPVEIAMRYGEPALPQVLERLAAQGVRKVTLAPLYPQFADSTVTTVVALANQTVAERALPLQLRVLQPFYDHPEYIDALVASARPYLEQDYDHLLLSFHGLPERHLKKLMPGSKHDLRAADCCKDASAEVRAVCYRGQCLASAKAFATRMGIPDGKWSVSFQSRLGRDKWIEPYTETRLDELAKAGAKKLLVMCPAFVADCIETLEEIGDRGKEQFIEAGGEELVLVPCLNDHPEWVRVLARMCEKA</sequence>
<comment type="function">
    <text evidence="1">Catalyzes the ferrous insertion into protoporphyrin IX.</text>
</comment>
<comment type="catalytic activity">
    <reaction evidence="1">
        <text>heme b + 2 H(+) = protoporphyrin IX + Fe(2+)</text>
        <dbReference type="Rhea" id="RHEA:22584"/>
        <dbReference type="ChEBI" id="CHEBI:15378"/>
        <dbReference type="ChEBI" id="CHEBI:29033"/>
        <dbReference type="ChEBI" id="CHEBI:57306"/>
        <dbReference type="ChEBI" id="CHEBI:60344"/>
        <dbReference type="EC" id="4.98.1.1"/>
    </reaction>
</comment>
<comment type="pathway">
    <text evidence="1">Porphyrin-containing compound metabolism; protoheme biosynthesis; protoheme from protoporphyrin-IX: step 1/1.</text>
</comment>
<comment type="subcellular location">
    <subcellularLocation>
        <location evidence="1">Cytoplasm</location>
    </subcellularLocation>
</comment>
<comment type="similarity">
    <text evidence="1">Belongs to the ferrochelatase family.</text>
</comment>
<evidence type="ECO:0000255" key="1">
    <source>
        <dbReference type="HAMAP-Rule" id="MF_00323"/>
    </source>
</evidence>
<accession>B1JER5</accession>
<protein>
    <recommendedName>
        <fullName evidence="1">Ferrochelatase</fullName>
        <ecNumber evidence="1">4.98.1.1</ecNumber>
    </recommendedName>
    <alternativeName>
        <fullName evidence="1">Heme synthase</fullName>
    </alternativeName>
    <alternativeName>
        <fullName evidence="1">Protoheme ferro-lyase</fullName>
    </alternativeName>
</protein>
<proteinExistence type="inferred from homology"/>
<gene>
    <name evidence="1" type="primary">hemH</name>
    <name type="ordered locus">PputW619_4445</name>
</gene>
<dbReference type="EC" id="4.98.1.1" evidence="1"/>
<dbReference type="EMBL" id="CP000949">
    <property type="protein sequence ID" value="ACA74925.1"/>
    <property type="molecule type" value="Genomic_DNA"/>
</dbReference>
<dbReference type="SMR" id="B1JER5"/>
<dbReference type="STRING" id="390235.PputW619_4445"/>
<dbReference type="KEGG" id="ppw:PputW619_4445"/>
<dbReference type="eggNOG" id="COG0276">
    <property type="taxonomic scope" value="Bacteria"/>
</dbReference>
<dbReference type="HOGENOM" id="CLU_018884_0_1_6"/>
<dbReference type="OrthoDB" id="9809741at2"/>
<dbReference type="UniPathway" id="UPA00252">
    <property type="reaction ID" value="UER00325"/>
</dbReference>
<dbReference type="GO" id="GO:0005737">
    <property type="term" value="C:cytoplasm"/>
    <property type="evidence" value="ECO:0007669"/>
    <property type="project" value="UniProtKB-SubCell"/>
</dbReference>
<dbReference type="GO" id="GO:0004325">
    <property type="term" value="F:ferrochelatase activity"/>
    <property type="evidence" value="ECO:0007669"/>
    <property type="project" value="UniProtKB-UniRule"/>
</dbReference>
<dbReference type="GO" id="GO:0046872">
    <property type="term" value="F:metal ion binding"/>
    <property type="evidence" value="ECO:0007669"/>
    <property type="project" value="UniProtKB-KW"/>
</dbReference>
<dbReference type="GO" id="GO:0006783">
    <property type="term" value="P:heme biosynthetic process"/>
    <property type="evidence" value="ECO:0007669"/>
    <property type="project" value="UniProtKB-UniRule"/>
</dbReference>
<dbReference type="CDD" id="cd00419">
    <property type="entry name" value="Ferrochelatase_C"/>
    <property type="match status" value="1"/>
</dbReference>
<dbReference type="CDD" id="cd03411">
    <property type="entry name" value="Ferrochelatase_N"/>
    <property type="match status" value="1"/>
</dbReference>
<dbReference type="Gene3D" id="3.40.50.1400">
    <property type="match status" value="2"/>
</dbReference>
<dbReference type="HAMAP" id="MF_00323">
    <property type="entry name" value="Ferrochelatase"/>
    <property type="match status" value="1"/>
</dbReference>
<dbReference type="InterPro" id="IPR001015">
    <property type="entry name" value="Ferrochelatase"/>
</dbReference>
<dbReference type="InterPro" id="IPR033644">
    <property type="entry name" value="Ferrochelatase_C"/>
</dbReference>
<dbReference type="InterPro" id="IPR033659">
    <property type="entry name" value="Ferrochelatase_N"/>
</dbReference>
<dbReference type="NCBIfam" id="TIGR00109">
    <property type="entry name" value="hemH"/>
    <property type="match status" value="1"/>
</dbReference>
<dbReference type="PANTHER" id="PTHR11108">
    <property type="entry name" value="FERROCHELATASE"/>
    <property type="match status" value="1"/>
</dbReference>
<dbReference type="PANTHER" id="PTHR11108:SF1">
    <property type="entry name" value="FERROCHELATASE, MITOCHONDRIAL"/>
    <property type="match status" value="1"/>
</dbReference>
<dbReference type="Pfam" id="PF00762">
    <property type="entry name" value="Ferrochelatase"/>
    <property type="match status" value="1"/>
</dbReference>
<dbReference type="SUPFAM" id="SSF53800">
    <property type="entry name" value="Chelatase"/>
    <property type="match status" value="1"/>
</dbReference>
<feature type="chain" id="PRO_1000116068" description="Ferrochelatase">
    <location>
        <begin position="1"/>
        <end position="337"/>
    </location>
</feature>
<feature type="binding site" evidence="1">
    <location>
        <position position="189"/>
    </location>
    <ligand>
        <name>Fe cation</name>
        <dbReference type="ChEBI" id="CHEBI:24875"/>
    </ligand>
</feature>
<feature type="binding site" evidence="1">
    <location>
        <position position="293"/>
    </location>
    <ligand>
        <name>Fe cation</name>
        <dbReference type="ChEBI" id="CHEBI:24875"/>
    </ligand>
</feature>
<organism>
    <name type="scientific">Pseudomonas putida (strain W619)</name>
    <dbReference type="NCBI Taxonomy" id="390235"/>
    <lineage>
        <taxon>Bacteria</taxon>
        <taxon>Pseudomonadati</taxon>
        <taxon>Pseudomonadota</taxon>
        <taxon>Gammaproteobacteria</taxon>
        <taxon>Pseudomonadales</taxon>
        <taxon>Pseudomonadaceae</taxon>
        <taxon>Pseudomonas</taxon>
    </lineage>
</organism>
<reference key="1">
    <citation type="submission" date="2008-02" db="EMBL/GenBank/DDBJ databases">
        <title>Complete sequence of Pseudomonas putida W619.</title>
        <authorList>
            <person name="Copeland A."/>
            <person name="Lucas S."/>
            <person name="Lapidus A."/>
            <person name="Barry K."/>
            <person name="Detter J.C."/>
            <person name="Glavina del Rio T."/>
            <person name="Dalin E."/>
            <person name="Tice H."/>
            <person name="Pitluck S."/>
            <person name="Chain P."/>
            <person name="Malfatti S."/>
            <person name="Shin M."/>
            <person name="Vergez L."/>
            <person name="Schmutz J."/>
            <person name="Larimer F."/>
            <person name="Land M."/>
            <person name="Hauser L."/>
            <person name="Kyrpides N."/>
            <person name="Kim E."/>
            <person name="Taghavi S."/>
            <person name="Vangronsveld D."/>
            <person name="van der Lelie D."/>
            <person name="Richardson P."/>
        </authorList>
    </citation>
    <scope>NUCLEOTIDE SEQUENCE [LARGE SCALE GENOMIC DNA]</scope>
    <source>
        <strain>W619</strain>
    </source>
</reference>
<name>HEMH_PSEPW</name>